<comment type="interaction">
    <interactant intactId="EBI-10329620">
        <id>Q9H972</id>
    </interactant>
    <interactant intactId="EBI-995714">
        <id>Q9Y605</id>
        <label>MRFAP1</label>
    </interactant>
    <organismsDiffer>false</organismsDiffer>
    <experiments>4</experiments>
</comment>
<comment type="interaction">
    <interactant intactId="EBI-11524174">
        <id>Q9H972-2</id>
    </interactant>
    <interactant intactId="EBI-750300">
        <id>Q01658</id>
        <label>DR1</label>
    </interactant>
    <organismsDiffer>false</organismsDiffer>
    <experiments>3</experiments>
</comment>
<comment type="interaction">
    <interactant intactId="EBI-11524174">
        <id>Q9H972-2</id>
    </interactant>
    <interactant intactId="EBI-389564">
        <id>Q00403</id>
        <label>GTF2B</label>
    </interactant>
    <organismsDiffer>false</organismsDiffer>
    <experiments>3</experiments>
</comment>
<comment type="subcellular location">
    <subcellularLocation>
        <location evidence="5">Secreted</location>
    </subcellularLocation>
</comment>
<comment type="alternative products">
    <event type="alternative splicing"/>
    <isoform>
        <id>Q9H972-1</id>
        <name>1</name>
        <sequence type="displayed"/>
    </isoform>
    <isoform>
        <id>Q9H972-2</id>
        <name>2</name>
        <sequence type="described" ref="VSP_007850"/>
    </isoform>
</comment>
<dbReference type="EMBL" id="AK023026">
    <property type="protein sequence ID" value="BAB14363.1"/>
    <property type="molecule type" value="mRNA"/>
</dbReference>
<dbReference type="EMBL" id="AK022216">
    <property type="protein sequence ID" value="BAB13988.1"/>
    <property type="molecule type" value="mRNA"/>
</dbReference>
<dbReference type="EMBL" id="BX161383">
    <property type="protein sequence ID" value="CAD61874.1"/>
    <property type="molecule type" value="mRNA"/>
</dbReference>
<dbReference type="EMBL" id="BX161417">
    <property type="protein sequence ID" value="CAD61892.1"/>
    <property type="molecule type" value="mRNA"/>
</dbReference>
<dbReference type="EMBL" id="BX161474">
    <property type="protein sequence ID" value="CAD61930.1"/>
    <property type="molecule type" value="mRNA"/>
</dbReference>
<dbReference type="EMBL" id="BX161507">
    <property type="protein sequence ID" value="CAD61946.1"/>
    <property type="molecule type" value="mRNA"/>
</dbReference>
<dbReference type="EMBL" id="AL132780">
    <property type="status" value="NOT_ANNOTATED_CDS"/>
    <property type="molecule type" value="Genomic_DNA"/>
</dbReference>
<dbReference type="EMBL" id="CH471078">
    <property type="protein sequence ID" value="EAW66196.1"/>
    <property type="molecule type" value="Genomic_DNA"/>
</dbReference>
<dbReference type="EMBL" id="CH471078">
    <property type="protein sequence ID" value="EAW66198.1"/>
    <property type="molecule type" value="Genomic_DNA"/>
</dbReference>
<dbReference type="EMBL" id="CH471078">
    <property type="protein sequence ID" value="EAW66199.1"/>
    <property type="molecule type" value="Genomic_DNA"/>
</dbReference>
<dbReference type="EMBL" id="CH471078">
    <property type="protein sequence ID" value="EAW66200.1"/>
    <property type="molecule type" value="Genomic_DNA"/>
</dbReference>
<dbReference type="EMBL" id="CH471078">
    <property type="protein sequence ID" value="EAW66201.1"/>
    <property type="molecule type" value="Genomic_DNA"/>
</dbReference>
<dbReference type="EMBL" id="CH471078">
    <property type="protein sequence ID" value="EAW66202.1"/>
    <property type="molecule type" value="Genomic_DNA"/>
</dbReference>
<dbReference type="EMBL" id="CH471078">
    <property type="protein sequence ID" value="EAW66203.1"/>
    <property type="molecule type" value="Genomic_DNA"/>
</dbReference>
<dbReference type="EMBL" id="BC014299">
    <property type="protein sequence ID" value="AAH14299.1"/>
    <property type="molecule type" value="mRNA"/>
</dbReference>
<dbReference type="CCDS" id="CCDS61400.1">
    <molecule id="Q9H972-2"/>
</dbReference>
<dbReference type="CCDS" id="CCDS9583.1">
    <molecule id="Q9H972-1"/>
</dbReference>
<dbReference type="RefSeq" id="NP_001124178.1">
    <molecule id="Q9H972-1"/>
    <property type="nucleotide sequence ID" value="NM_001130706.3"/>
</dbReference>
<dbReference type="RefSeq" id="NP_001124180.1">
    <molecule id="Q9H972-1"/>
    <property type="nucleotide sequence ID" value="NM_001130708.3"/>
</dbReference>
<dbReference type="RefSeq" id="NP_001269897.1">
    <property type="nucleotide sequence ID" value="NM_001282968.1"/>
</dbReference>
<dbReference type="RefSeq" id="NP_001269898.1">
    <property type="nucleotide sequence ID" value="NM_001282969.1"/>
</dbReference>
<dbReference type="RefSeq" id="NP_001269899.1">
    <molecule id="Q9H972-2"/>
    <property type="nucleotide sequence ID" value="NM_001282970.2"/>
</dbReference>
<dbReference type="RefSeq" id="NP_068763.2">
    <molecule id="Q9H972-1"/>
    <property type="nucleotide sequence ID" value="NM_021944.4"/>
</dbReference>
<dbReference type="RefSeq" id="XP_005268028.1">
    <molecule id="Q9H972-1"/>
    <property type="nucleotide sequence ID" value="XM_005267971.2"/>
</dbReference>
<dbReference type="RefSeq" id="XP_005268029.1">
    <molecule id="Q9H972-1"/>
    <property type="nucleotide sequence ID" value="XM_005267972.3"/>
</dbReference>
<dbReference type="RefSeq" id="XP_006720294.1">
    <property type="nucleotide sequence ID" value="XM_006720231.1"/>
</dbReference>
<dbReference type="RefSeq" id="XP_006720295.1">
    <property type="nucleotide sequence ID" value="XM_006720232.2"/>
</dbReference>
<dbReference type="RefSeq" id="XP_011535361.1">
    <molecule id="Q9H972-1"/>
    <property type="nucleotide sequence ID" value="XM_011537059.2"/>
</dbReference>
<dbReference type="RefSeq" id="XP_011535362.1">
    <molecule id="Q9H972-1"/>
    <property type="nucleotide sequence ID" value="XM_011537060.4"/>
</dbReference>
<dbReference type="RefSeq" id="XP_011535364.1">
    <molecule id="Q9H972-1"/>
    <property type="nucleotide sequence ID" value="XM_011537062.3"/>
</dbReference>
<dbReference type="RefSeq" id="XP_016877058.1">
    <property type="nucleotide sequence ID" value="XM_017021569.1"/>
</dbReference>
<dbReference type="RefSeq" id="XP_016877059.1">
    <molecule id="Q9H972-1"/>
    <property type="nucleotide sequence ID" value="XM_017021570.3"/>
</dbReference>
<dbReference type="RefSeq" id="XP_016877060.1">
    <property type="nucleotide sequence ID" value="XM_017021571.1"/>
</dbReference>
<dbReference type="RefSeq" id="XP_016877061.1">
    <molecule id="Q9H972-1"/>
    <property type="nucleotide sequence ID" value="XM_017021572.3"/>
</dbReference>
<dbReference type="RefSeq" id="XP_016877062.1">
    <molecule id="Q9H972-1"/>
    <property type="nucleotide sequence ID" value="XM_017021573.2"/>
</dbReference>
<dbReference type="RefSeq" id="XP_016877063.1">
    <molecule id="Q9H972-1"/>
    <property type="nucleotide sequence ID" value="XM_017021574.3"/>
</dbReference>
<dbReference type="RefSeq" id="XP_016877064.1">
    <property type="nucleotide sequence ID" value="XM_017021575.1"/>
</dbReference>
<dbReference type="RefSeq" id="XP_016877065.1">
    <property type="nucleotide sequence ID" value="XM_017021576.1"/>
</dbReference>
<dbReference type="RefSeq" id="XP_016877066.1">
    <property type="nucleotide sequence ID" value="XM_017021577.1"/>
</dbReference>
<dbReference type="RefSeq" id="XP_047287616.1">
    <molecule id="Q9H972-1"/>
    <property type="nucleotide sequence ID" value="XM_047431660.1"/>
</dbReference>
<dbReference type="RefSeq" id="XP_047287617.1">
    <molecule id="Q9H972-1"/>
    <property type="nucleotide sequence ID" value="XM_047431661.1"/>
</dbReference>
<dbReference type="RefSeq" id="XP_047287618.1">
    <molecule id="Q9H972-1"/>
    <property type="nucleotide sequence ID" value="XM_047431662.1"/>
</dbReference>
<dbReference type="RefSeq" id="XP_047287619.1">
    <molecule id="Q9H972-1"/>
    <property type="nucleotide sequence ID" value="XM_047431663.1"/>
</dbReference>
<dbReference type="RefSeq" id="XP_047287620.1">
    <molecule id="Q9H972-1"/>
    <property type="nucleotide sequence ID" value="XM_047431664.1"/>
</dbReference>
<dbReference type="RefSeq" id="XP_047287621.1">
    <molecule id="Q9H972-1"/>
    <property type="nucleotide sequence ID" value="XM_047431665.1"/>
</dbReference>
<dbReference type="RefSeq" id="XP_047287622.1">
    <molecule id="Q9H972-1"/>
    <property type="nucleotide sequence ID" value="XM_047431666.1"/>
</dbReference>
<dbReference type="RefSeq" id="XP_054232518.1">
    <molecule id="Q9H972-1"/>
    <property type="nucleotide sequence ID" value="XM_054376543.1"/>
</dbReference>
<dbReference type="RefSeq" id="XP_054232519.1">
    <molecule id="Q9H972-1"/>
    <property type="nucleotide sequence ID" value="XM_054376544.1"/>
</dbReference>
<dbReference type="RefSeq" id="XP_054232520.1">
    <molecule id="Q9H972-1"/>
    <property type="nucleotide sequence ID" value="XM_054376545.1"/>
</dbReference>
<dbReference type="RefSeq" id="XP_054232521.1">
    <molecule id="Q9H972-1"/>
    <property type="nucleotide sequence ID" value="XM_054376546.1"/>
</dbReference>
<dbReference type="SMR" id="Q9H972"/>
<dbReference type="BioGRID" id="121959">
    <property type="interactions" value="11"/>
</dbReference>
<dbReference type="FunCoup" id="Q9H972">
    <property type="interactions" value="403"/>
</dbReference>
<dbReference type="IntAct" id="Q9H972">
    <property type="interactions" value="8"/>
</dbReference>
<dbReference type="MINT" id="Q9H972"/>
<dbReference type="STRING" id="9606.ENSP00000299088"/>
<dbReference type="iPTMnet" id="Q9H972"/>
<dbReference type="PhosphoSitePlus" id="Q9H972"/>
<dbReference type="BioMuta" id="C14orf93"/>
<dbReference type="DMDM" id="33301115"/>
<dbReference type="jPOST" id="Q9H972"/>
<dbReference type="MassIVE" id="Q9H972"/>
<dbReference type="PaxDb" id="9606-ENSP00000299088"/>
<dbReference type="PeptideAtlas" id="Q9H972"/>
<dbReference type="ProteomicsDB" id="81287">
    <molecule id="Q9H972-1"/>
</dbReference>
<dbReference type="ProteomicsDB" id="81288">
    <molecule id="Q9H972-2"/>
</dbReference>
<dbReference type="Antibodypedia" id="120">
    <property type="antibodies" value="16 antibodies from 11 providers"/>
</dbReference>
<dbReference type="DNASU" id="60686"/>
<dbReference type="Ensembl" id="ENST00000299088.11">
    <molecule id="Q9H972-1"/>
    <property type="protein sequence ID" value="ENSP00000299088.6"/>
    <property type="gene ID" value="ENSG00000100802.15"/>
</dbReference>
<dbReference type="Ensembl" id="ENST00000341470.8">
    <molecule id="Q9H972-2"/>
    <property type="protein sequence ID" value="ENSP00000341353.4"/>
    <property type="gene ID" value="ENSG00000100802.15"/>
</dbReference>
<dbReference type="Ensembl" id="ENST00000397379.7">
    <molecule id="Q9H972-1"/>
    <property type="protein sequence ID" value="ENSP00000380535.3"/>
    <property type="gene ID" value="ENSG00000100802.15"/>
</dbReference>
<dbReference type="Ensembl" id="ENST00000397382.8">
    <molecule id="Q9H972-1"/>
    <property type="protein sequence ID" value="ENSP00000380538.4"/>
    <property type="gene ID" value="ENSG00000100802.15"/>
</dbReference>
<dbReference type="GeneID" id="60686"/>
<dbReference type="KEGG" id="hsa:60686"/>
<dbReference type="MANE-Select" id="ENST00000299088.11">
    <property type="protein sequence ID" value="ENSP00000299088.6"/>
    <property type="RefSeq nucleotide sequence ID" value="NM_021944.4"/>
    <property type="RefSeq protein sequence ID" value="NP_068763.2"/>
</dbReference>
<dbReference type="UCSC" id="uc001wia.6">
    <molecule id="Q9H972-1"/>
    <property type="organism name" value="human"/>
</dbReference>
<dbReference type="AGR" id="HGNC:20162"/>
<dbReference type="CTD" id="60686"/>
<dbReference type="DisGeNET" id="60686"/>
<dbReference type="GeneCards" id="C14orf93"/>
<dbReference type="HGNC" id="HGNC:20162">
    <property type="gene designation" value="C14orf93"/>
</dbReference>
<dbReference type="HPA" id="ENSG00000100802">
    <property type="expression patterns" value="Low tissue specificity"/>
</dbReference>
<dbReference type="neXtProt" id="NX_Q9H972"/>
<dbReference type="OpenTargets" id="ENSG00000100802"/>
<dbReference type="PharmGKB" id="PA134982493"/>
<dbReference type="VEuPathDB" id="HostDB:ENSG00000100802"/>
<dbReference type="eggNOG" id="ENOG502QR1B">
    <property type="taxonomic scope" value="Eukaryota"/>
</dbReference>
<dbReference type="GeneTree" id="ENSGT00390000012708"/>
<dbReference type="InParanoid" id="Q9H972"/>
<dbReference type="OMA" id="FDQSHKT"/>
<dbReference type="OrthoDB" id="9426338at2759"/>
<dbReference type="PAN-GO" id="Q9H972">
    <property type="GO annotations" value="0 GO annotations based on evolutionary models"/>
</dbReference>
<dbReference type="PhylomeDB" id="Q9H972"/>
<dbReference type="TreeFam" id="TF336941"/>
<dbReference type="PathwayCommons" id="Q9H972"/>
<dbReference type="SignaLink" id="Q9H972"/>
<dbReference type="BioGRID-ORCS" id="60686">
    <property type="hits" value="20 hits in 1149 CRISPR screens"/>
</dbReference>
<dbReference type="ChiTaRS" id="C14orf93">
    <property type="organism name" value="human"/>
</dbReference>
<dbReference type="GenomeRNAi" id="60686"/>
<dbReference type="Pharos" id="Q9H972">
    <property type="development level" value="Tdark"/>
</dbReference>
<dbReference type="PRO" id="PR:Q9H972"/>
<dbReference type="Proteomes" id="UP000005640">
    <property type="component" value="Chromosome 14"/>
</dbReference>
<dbReference type="RNAct" id="Q9H972">
    <property type="molecule type" value="protein"/>
</dbReference>
<dbReference type="Bgee" id="ENSG00000100802">
    <property type="expression patterns" value="Expressed in primordial germ cell in gonad and 134 other cell types or tissues"/>
</dbReference>
<dbReference type="ExpressionAtlas" id="Q9H972">
    <property type="expression patterns" value="baseline and differential"/>
</dbReference>
<dbReference type="GO" id="GO:0005576">
    <property type="term" value="C:extracellular region"/>
    <property type="evidence" value="ECO:0007669"/>
    <property type="project" value="UniProtKB-SubCell"/>
</dbReference>
<dbReference type="GO" id="GO:0003723">
    <property type="term" value="F:RNA binding"/>
    <property type="evidence" value="ECO:0007005"/>
    <property type="project" value="UniProtKB"/>
</dbReference>
<dbReference type="GO" id="GO:0030154">
    <property type="term" value="P:cell differentiation"/>
    <property type="evidence" value="ECO:0007669"/>
    <property type="project" value="Ensembl"/>
</dbReference>
<dbReference type="GO" id="GO:0010628">
    <property type="term" value="P:positive regulation of gene expression"/>
    <property type="evidence" value="ECO:0007669"/>
    <property type="project" value="Ensembl"/>
</dbReference>
<dbReference type="InterPro" id="IPR028101">
    <property type="entry name" value="DUF4616"/>
</dbReference>
<dbReference type="PANTHER" id="PTHR14375">
    <property type="entry name" value="SIMILAR TO RIKEN CDNA 4931414P19"/>
    <property type="match status" value="1"/>
</dbReference>
<dbReference type="PANTHER" id="PTHR14375:SF2">
    <property type="entry name" value="SIMILAR TO RIKEN CDNA 4931414P19"/>
    <property type="match status" value="1"/>
</dbReference>
<dbReference type="Pfam" id="PF15394">
    <property type="entry name" value="DUF4616"/>
    <property type="match status" value="1"/>
</dbReference>
<reference key="1">
    <citation type="journal article" date="2004" name="Nat. Genet.">
        <title>Complete sequencing and characterization of 21,243 full-length human cDNAs.</title>
        <authorList>
            <person name="Ota T."/>
            <person name="Suzuki Y."/>
            <person name="Nishikawa T."/>
            <person name="Otsuki T."/>
            <person name="Sugiyama T."/>
            <person name="Irie R."/>
            <person name="Wakamatsu A."/>
            <person name="Hayashi K."/>
            <person name="Sato H."/>
            <person name="Nagai K."/>
            <person name="Kimura K."/>
            <person name="Makita H."/>
            <person name="Sekine M."/>
            <person name="Obayashi M."/>
            <person name="Nishi T."/>
            <person name="Shibahara T."/>
            <person name="Tanaka T."/>
            <person name="Ishii S."/>
            <person name="Yamamoto J."/>
            <person name="Saito K."/>
            <person name="Kawai Y."/>
            <person name="Isono Y."/>
            <person name="Nakamura Y."/>
            <person name="Nagahari K."/>
            <person name="Murakami K."/>
            <person name="Yasuda T."/>
            <person name="Iwayanagi T."/>
            <person name="Wagatsuma M."/>
            <person name="Shiratori A."/>
            <person name="Sudo H."/>
            <person name="Hosoiri T."/>
            <person name="Kaku Y."/>
            <person name="Kodaira H."/>
            <person name="Kondo H."/>
            <person name="Sugawara M."/>
            <person name="Takahashi M."/>
            <person name="Kanda K."/>
            <person name="Yokoi T."/>
            <person name="Furuya T."/>
            <person name="Kikkawa E."/>
            <person name="Omura Y."/>
            <person name="Abe K."/>
            <person name="Kamihara K."/>
            <person name="Katsuta N."/>
            <person name="Sato K."/>
            <person name="Tanikawa M."/>
            <person name="Yamazaki M."/>
            <person name="Ninomiya K."/>
            <person name="Ishibashi T."/>
            <person name="Yamashita H."/>
            <person name="Murakawa K."/>
            <person name="Fujimori K."/>
            <person name="Tanai H."/>
            <person name="Kimata M."/>
            <person name="Watanabe M."/>
            <person name="Hiraoka S."/>
            <person name="Chiba Y."/>
            <person name="Ishida S."/>
            <person name="Ono Y."/>
            <person name="Takiguchi S."/>
            <person name="Watanabe S."/>
            <person name="Yosida M."/>
            <person name="Hotuta T."/>
            <person name="Kusano J."/>
            <person name="Kanehori K."/>
            <person name="Takahashi-Fujii A."/>
            <person name="Hara H."/>
            <person name="Tanase T.-O."/>
            <person name="Nomura Y."/>
            <person name="Togiya S."/>
            <person name="Komai F."/>
            <person name="Hara R."/>
            <person name="Takeuchi K."/>
            <person name="Arita M."/>
            <person name="Imose N."/>
            <person name="Musashino K."/>
            <person name="Yuuki H."/>
            <person name="Oshima A."/>
            <person name="Sasaki N."/>
            <person name="Aotsuka S."/>
            <person name="Yoshikawa Y."/>
            <person name="Matsunawa H."/>
            <person name="Ichihara T."/>
            <person name="Shiohata N."/>
            <person name="Sano S."/>
            <person name="Moriya S."/>
            <person name="Momiyama H."/>
            <person name="Satoh N."/>
            <person name="Takami S."/>
            <person name="Terashima Y."/>
            <person name="Suzuki O."/>
            <person name="Nakagawa S."/>
            <person name="Senoh A."/>
            <person name="Mizoguchi H."/>
            <person name="Goto Y."/>
            <person name="Shimizu F."/>
            <person name="Wakebe H."/>
            <person name="Hishigaki H."/>
            <person name="Watanabe T."/>
            <person name="Sugiyama A."/>
            <person name="Takemoto M."/>
            <person name="Kawakami B."/>
            <person name="Yamazaki M."/>
            <person name="Watanabe K."/>
            <person name="Kumagai A."/>
            <person name="Itakura S."/>
            <person name="Fukuzumi Y."/>
            <person name="Fujimori Y."/>
            <person name="Komiyama M."/>
            <person name="Tashiro H."/>
            <person name="Tanigami A."/>
            <person name="Fujiwara T."/>
            <person name="Ono T."/>
            <person name="Yamada K."/>
            <person name="Fujii Y."/>
            <person name="Ozaki K."/>
            <person name="Hirao M."/>
            <person name="Ohmori Y."/>
            <person name="Kawabata A."/>
            <person name="Hikiji T."/>
            <person name="Kobatake N."/>
            <person name="Inagaki H."/>
            <person name="Ikema Y."/>
            <person name="Okamoto S."/>
            <person name="Okitani R."/>
            <person name="Kawakami T."/>
            <person name="Noguchi S."/>
            <person name="Itoh T."/>
            <person name="Shigeta K."/>
            <person name="Senba T."/>
            <person name="Matsumura K."/>
            <person name="Nakajima Y."/>
            <person name="Mizuno T."/>
            <person name="Morinaga M."/>
            <person name="Sasaki M."/>
            <person name="Togashi T."/>
            <person name="Oyama M."/>
            <person name="Hata H."/>
            <person name="Watanabe M."/>
            <person name="Komatsu T."/>
            <person name="Mizushima-Sugano J."/>
            <person name="Satoh T."/>
            <person name="Shirai Y."/>
            <person name="Takahashi Y."/>
            <person name="Nakagawa K."/>
            <person name="Okumura K."/>
            <person name="Nagase T."/>
            <person name="Nomura N."/>
            <person name="Kikuchi H."/>
            <person name="Masuho Y."/>
            <person name="Yamashita R."/>
            <person name="Nakai K."/>
            <person name="Yada T."/>
            <person name="Nakamura Y."/>
            <person name="Ohara O."/>
            <person name="Isogai T."/>
            <person name="Sugano S."/>
        </authorList>
    </citation>
    <scope>NUCLEOTIDE SEQUENCE [LARGE SCALE MRNA] (ISOFORM 1)</scope>
    <source>
        <tissue>Mammary gland</tissue>
    </source>
</reference>
<reference key="2">
    <citation type="submission" date="2003-01" db="EMBL/GenBank/DDBJ databases">
        <title>Full-length cDNA libraries and normalization.</title>
        <authorList>
            <person name="Li W.B."/>
            <person name="Gruber C."/>
            <person name="Jessee J."/>
            <person name="Polayes D."/>
        </authorList>
    </citation>
    <scope>NUCLEOTIDE SEQUENCE [LARGE SCALE MRNA] (ISOFORM 1)</scope>
    <source>
        <tissue>Cervix carcinoma</tissue>
        <tissue>Neuroblastoma</tissue>
        <tissue>Placenta</tissue>
    </source>
</reference>
<reference key="3">
    <citation type="journal article" date="2003" name="Nature">
        <title>The DNA sequence and analysis of human chromosome 14.</title>
        <authorList>
            <person name="Heilig R."/>
            <person name="Eckenberg R."/>
            <person name="Petit J.-L."/>
            <person name="Fonknechten N."/>
            <person name="Da Silva C."/>
            <person name="Cattolico L."/>
            <person name="Levy M."/>
            <person name="Barbe V."/>
            <person name="De Berardinis V."/>
            <person name="Ureta-Vidal A."/>
            <person name="Pelletier E."/>
            <person name="Vico V."/>
            <person name="Anthouard V."/>
            <person name="Rowen L."/>
            <person name="Madan A."/>
            <person name="Qin S."/>
            <person name="Sun H."/>
            <person name="Du H."/>
            <person name="Pepin K."/>
            <person name="Artiguenave F."/>
            <person name="Robert C."/>
            <person name="Cruaud C."/>
            <person name="Bruels T."/>
            <person name="Jaillon O."/>
            <person name="Friedlander L."/>
            <person name="Samson G."/>
            <person name="Brottier P."/>
            <person name="Cure S."/>
            <person name="Segurens B."/>
            <person name="Aniere F."/>
            <person name="Samain S."/>
            <person name="Crespeau H."/>
            <person name="Abbasi N."/>
            <person name="Aiach N."/>
            <person name="Boscus D."/>
            <person name="Dickhoff R."/>
            <person name="Dors M."/>
            <person name="Dubois I."/>
            <person name="Friedman C."/>
            <person name="Gouyvenoux M."/>
            <person name="James R."/>
            <person name="Madan A."/>
            <person name="Mairey-Estrada B."/>
            <person name="Mangenot S."/>
            <person name="Martins N."/>
            <person name="Menard M."/>
            <person name="Oztas S."/>
            <person name="Ratcliffe A."/>
            <person name="Shaffer T."/>
            <person name="Trask B."/>
            <person name="Vacherie B."/>
            <person name="Bellemere C."/>
            <person name="Belser C."/>
            <person name="Besnard-Gonnet M."/>
            <person name="Bartol-Mavel D."/>
            <person name="Boutard M."/>
            <person name="Briez-Silla S."/>
            <person name="Combette S."/>
            <person name="Dufosse-Laurent V."/>
            <person name="Ferron C."/>
            <person name="Lechaplais C."/>
            <person name="Louesse C."/>
            <person name="Muselet D."/>
            <person name="Magdelenat G."/>
            <person name="Pateau E."/>
            <person name="Petit E."/>
            <person name="Sirvain-Trukniewicz P."/>
            <person name="Trybou A."/>
            <person name="Vega-Czarny N."/>
            <person name="Bataille E."/>
            <person name="Bluet E."/>
            <person name="Bordelais I."/>
            <person name="Dubois M."/>
            <person name="Dumont C."/>
            <person name="Guerin T."/>
            <person name="Haffray S."/>
            <person name="Hammadi R."/>
            <person name="Muanga J."/>
            <person name="Pellouin V."/>
            <person name="Robert D."/>
            <person name="Wunderle E."/>
            <person name="Gauguet G."/>
            <person name="Roy A."/>
            <person name="Sainte-Marthe L."/>
            <person name="Verdier J."/>
            <person name="Verdier-Discala C."/>
            <person name="Hillier L.W."/>
            <person name="Fulton L."/>
            <person name="McPherson J."/>
            <person name="Matsuda F."/>
            <person name="Wilson R."/>
            <person name="Scarpelli C."/>
            <person name="Gyapay G."/>
            <person name="Wincker P."/>
            <person name="Saurin W."/>
            <person name="Quetier F."/>
            <person name="Waterston R."/>
            <person name="Hood L."/>
            <person name="Weissenbach J."/>
        </authorList>
    </citation>
    <scope>NUCLEOTIDE SEQUENCE [LARGE SCALE GENOMIC DNA]</scope>
</reference>
<reference key="4">
    <citation type="submission" date="2005-09" db="EMBL/GenBank/DDBJ databases">
        <authorList>
            <person name="Mural R.J."/>
            <person name="Istrail S."/>
            <person name="Sutton G.G."/>
            <person name="Florea L."/>
            <person name="Halpern A.L."/>
            <person name="Mobarry C.M."/>
            <person name="Lippert R."/>
            <person name="Walenz B."/>
            <person name="Shatkay H."/>
            <person name="Dew I."/>
            <person name="Miller J.R."/>
            <person name="Flanigan M.J."/>
            <person name="Edwards N.J."/>
            <person name="Bolanos R."/>
            <person name="Fasulo D."/>
            <person name="Halldorsson B.V."/>
            <person name="Hannenhalli S."/>
            <person name="Turner R."/>
            <person name="Yooseph S."/>
            <person name="Lu F."/>
            <person name="Nusskern D.R."/>
            <person name="Shue B.C."/>
            <person name="Zheng X.H."/>
            <person name="Zhong F."/>
            <person name="Delcher A.L."/>
            <person name="Huson D.H."/>
            <person name="Kravitz S.A."/>
            <person name="Mouchard L."/>
            <person name="Reinert K."/>
            <person name="Remington K.A."/>
            <person name="Clark A.G."/>
            <person name="Waterman M.S."/>
            <person name="Eichler E.E."/>
            <person name="Adams M.D."/>
            <person name="Hunkapiller M.W."/>
            <person name="Myers E.W."/>
            <person name="Venter J.C."/>
        </authorList>
    </citation>
    <scope>NUCLEOTIDE SEQUENCE [LARGE SCALE GENOMIC DNA]</scope>
</reference>
<reference key="5">
    <citation type="journal article" date="2004" name="Genome Res.">
        <title>The status, quality, and expansion of the NIH full-length cDNA project: the Mammalian Gene Collection (MGC).</title>
        <authorList>
            <consortium name="The MGC Project Team"/>
        </authorList>
    </citation>
    <scope>NUCLEOTIDE SEQUENCE [LARGE SCALE MRNA] (ISOFORM 2)</scope>
    <source>
        <tissue>Lung adenocarcinoma</tissue>
    </source>
</reference>
<reference key="6">
    <citation type="journal article" date="2013" name="J. Proteome Res.">
        <title>Toward a comprehensive characterization of a human cancer cell phosphoproteome.</title>
        <authorList>
            <person name="Zhou H."/>
            <person name="Di Palma S."/>
            <person name="Preisinger C."/>
            <person name="Peng M."/>
            <person name="Polat A.N."/>
            <person name="Heck A.J."/>
            <person name="Mohammed S."/>
        </authorList>
    </citation>
    <scope>PHOSPHORYLATION [LARGE SCALE ANALYSIS] AT SER-224 AND SER-285</scope>
    <scope>IDENTIFICATION BY MASS SPECTROMETRY [LARGE SCALE ANALYSIS]</scope>
    <source>
        <tissue>Cervix carcinoma</tissue>
        <tissue>Erythroleukemia</tissue>
    </source>
</reference>
<reference key="7">
    <citation type="journal article" date="2017" name="Nat. Struct. Mol. Biol.">
        <title>Site-specific mapping of the human SUMO proteome reveals co-modification with phosphorylation.</title>
        <authorList>
            <person name="Hendriks I.A."/>
            <person name="Lyon D."/>
            <person name="Young C."/>
            <person name="Jensen L.J."/>
            <person name="Vertegaal A.C."/>
            <person name="Nielsen M.L."/>
        </authorList>
    </citation>
    <scope>SUMOYLATION [LARGE SCALE ANALYSIS] AT LYS-128 AND LYS-221</scope>
    <scope>IDENTIFICATION BY MASS SPECTROMETRY [LARGE SCALE ANALYSIS]</scope>
</reference>
<evidence type="ECO:0000250" key="1">
    <source>
        <dbReference type="UniProtKB" id="Q8K2W9"/>
    </source>
</evidence>
<evidence type="ECO:0000255" key="2"/>
<evidence type="ECO:0000256" key="3">
    <source>
        <dbReference type="SAM" id="MobiDB-lite"/>
    </source>
</evidence>
<evidence type="ECO:0000303" key="4">
    <source>
    </source>
</evidence>
<evidence type="ECO:0000305" key="5"/>
<evidence type="ECO:0007744" key="6">
    <source>
    </source>
</evidence>
<evidence type="ECO:0007744" key="7">
    <source>
    </source>
</evidence>
<keyword id="KW-0025">Alternative splicing</keyword>
<keyword id="KW-1017">Isopeptide bond</keyword>
<keyword id="KW-0597">Phosphoprotein</keyword>
<keyword id="KW-1267">Proteomics identification</keyword>
<keyword id="KW-1185">Reference proteome</keyword>
<keyword id="KW-0964">Secreted</keyword>
<keyword id="KW-0732">Signal</keyword>
<keyword id="KW-0832">Ubl conjugation</keyword>
<organism>
    <name type="scientific">Homo sapiens</name>
    <name type="common">Human</name>
    <dbReference type="NCBI Taxonomy" id="9606"/>
    <lineage>
        <taxon>Eukaryota</taxon>
        <taxon>Metazoa</taxon>
        <taxon>Chordata</taxon>
        <taxon>Craniata</taxon>
        <taxon>Vertebrata</taxon>
        <taxon>Euteleostomi</taxon>
        <taxon>Mammalia</taxon>
        <taxon>Eutheria</taxon>
        <taxon>Euarchontoglires</taxon>
        <taxon>Primates</taxon>
        <taxon>Haplorrhini</taxon>
        <taxon>Catarrhini</taxon>
        <taxon>Hominidae</taxon>
        <taxon>Homo</taxon>
    </lineage>
</organism>
<protein>
    <recommendedName>
        <fullName>Uncharacterized protein C14orf93</fullName>
    </recommendedName>
</protein>
<sequence length="538" mass="58697">MSFSATILFSPPSGSEARCCCCACKSETNGGNTGSQGGNPPPSTPITVTGHGLAVQSSEQLLHVIYQRVDKAVGLAEAALGLARANNELLKRLQEEVGDLRQGKVSIPDEDGESRAHSSPPEEPGPLKESPGEAFKALSAVEEECDSVGSGVQVVIEELRQLGAASVGPGPLGFPATQRDMRLPGCTLAASEAAPLLNPLVDDYVASEGAVQRVLVPAYAKQLSPATQLAIQRATPETGPENGTKLPPPRPEDMLNAAAALDSALEESGPGSTGELRHSLGLTVSPCRTRGSGQKNSRRKRDLVLSKLVHNVHNHITNDKRFNGSESIKSSWNISVVKFLLEKLKQELVTSPHNYTDKELKGACVAYFLTKRREYRNSLNPFKGLKEKEEKKLRSRRYRLFANRSSIMRHFGPEDQRLWNDVTEELMSDEEDSLNEPGVWVARPPRFRAQRLTELCYHLDANSKHGTKANRVYGPPSDRLPSAEAQLLPPELYNPNFQEEEDEGGDENAPGSPSFDQPHKTCCPDLNSFIEIKVEKDE</sequence>
<feature type="signal peptide" evidence="2">
    <location>
        <begin position="1"/>
        <end position="17"/>
    </location>
</feature>
<feature type="chain" id="PRO_0000020950" description="Uncharacterized protein C14orf93">
    <location>
        <begin position="18"/>
        <end position="538"/>
    </location>
</feature>
<feature type="region of interest" description="Disordered" evidence="3">
    <location>
        <begin position="101"/>
        <end position="131"/>
    </location>
</feature>
<feature type="region of interest" description="Disordered" evidence="3">
    <location>
        <begin position="233"/>
        <end position="253"/>
    </location>
</feature>
<feature type="region of interest" description="Disordered" evidence="3">
    <location>
        <begin position="488"/>
        <end position="523"/>
    </location>
</feature>
<feature type="modified residue" description="Phosphoserine" evidence="6">
    <location>
        <position position="224"/>
    </location>
</feature>
<feature type="modified residue" description="Phosphoserine" evidence="6">
    <location>
        <position position="285"/>
    </location>
</feature>
<feature type="modified residue" description="Phosphoserine" evidence="1">
    <location>
        <position position="428"/>
    </location>
</feature>
<feature type="cross-link" description="Glycyl lysine isopeptide (Lys-Gly) (interchain with G-Cter in SUMO2)" evidence="7">
    <location>
        <position position="128"/>
    </location>
</feature>
<feature type="cross-link" description="Glycyl lysine isopeptide (Lys-Gly) (interchain with G-Cter in SUMO2)" evidence="7">
    <location>
        <position position="221"/>
    </location>
</feature>
<feature type="splice variant" id="VSP_007850" description="In isoform 2." evidence="4">
    <location>
        <begin position="438"/>
        <end position="477"/>
    </location>
</feature>
<feature type="sequence variant" id="VAR_050875" description="In dbSNP:rs3829409.">
    <original>A</original>
    <variation>V</variation>
    <location>
        <position position="190"/>
    </location>
</feature>
<feature type="sequence conflict" description="In Ref. 5; AAH14299." evidence="5" ref="5">
    <original>R</original>
    <variation>L</variation>
    <location>
        <position position="394"/>
    </location>
</feature>
<feature type="sequence conflict" description="In Ref. 1; BAB13988." evidence="5" ref="1">
    <original>G</original>
    <variation>S</variation>
    <location>
        <position position="438"/>
    </location>
</feature>
<proteinExistence type="evidence at protein level"/>
<accession>Q9H972</accession>
<accession>B7WP03</accession>
<accession>D3DS38</accession>
<accession>D3DS39</accession>
<accession>Q86SE6</accession>
<accession>Q96CF7</accession>
<accession>Q9HA68</accession>
<gene>
    <name type="primary">C14orf93</name>
</gene>
<name>CN093_HUMAN</name>